<keyword id="KW-0963">Cytoplasm</keyword>
<keyword id="KW-0238">DNA-binding</keyword>
<keyword id="KW-1185">Reference proteome</keyword>
<keyword id="KW-0677">Repeat</keyword>
<keyword id="KW-0804">Transcription</keyword>
<keyword id="KW-0805">Transcription regulation</keyword>
<name>MRAZ_DESAH</name>
<dbReference type="EMBL" id="CP001087">
    <property type="protein sequence ID" value="ACN14374.1"/>
    <property type="molecule type" value="Genomic_DNA"/>
</dbReference>
<dbReference type="RefSeq" id="WP_015903161.1">
    <property type="nucleotide sequence ID" value="NC_012108.1"/>
</dbReference>
<dbReference type="SMR" id="C0Q8N4"/>
<dbReference type="STRING" id="177437.HRM2_12620"/>
<dbReference type="KEGG" id="dat:HRM2_12620"/>
<dbReference type="eggNOG" id="COG2001">
    <property type="taxonomic scope" value="Bacteria"/>
</dbReference>
<dbReference type="HOGENOM" id="CLU_107907_0_5_7"/>
<dbReference type="OrthoDB" id="9807753at2"/>
<dbReference type="Proteomes" id="UP000000442">
    <property type="component" value="Chromosome"/>
</dbReference>
<dbReference type="GO" id="GO:0005737">
    <property type="term" value="C:cytoplasm"/>
    <property type="evidence" value="ECO:0007669"/>
    <property type="project" value="UniProtKB-UniRule"/>
</dbReference>
<dbReference type="GO" id="GO:0009295">
    <property type="term" value="C:nucleoid"/>
    <property type="evidence" value="ECO:0007669"/>
    <property type="project" value="UniProtKB-SubCell"/>
</dbReference>
<dbReference type="GO" id="GO:0003700">
    <property type="term" value="F:DNA-binding transcription factor activity"/>
    <property type="evidence" value="ECO:0007669"/>
    <property type="project" value="UniProtKB-UniRule"/>
</dbReference>
<dbReference type="GO" id="GO:0000976">
    <property type="term" value="F:transcription cis-regulatory region binding"/>
    <property type="evidence" value="ECO:0007669"/>
    <property type="project" value="TreeGrafter"/>
</dbReference>
<dbReference type="GO" id="GO:2000143">
    <property type="term" value="P:negative regulation of DNA-templated transcription initiation"/>
    <property type="evidence" value="ECO:0007669"/>
    <property type="project" value="TreeGrafter"/>
</dbReference>
<dbReference type="CDD" id="cd16321">
    <property type="entry name" value="MraZ_C"/>
    <property type="match status" value="1"/>
</dbReference>
<dbReference type="CDD" id="cd16320">
    <property type="entry name" value="MraZ_N"/>
    <property type="match status" value="1"/>
</dbReference>
<dbReference type="Gene3D" id="3.40.1550.20">
    <property type="entry name" value="Transcriptional regulator MraZ domain"/>
    <property type="match status" value="1"/>
</dbReference>
<dbReference type="HAMAP" id="MF_01008">
    <property type="entry name" value="MraZ"/>
    <property type="match status" value="1"/>
</dbReference>
<dbReference type="InterPro" id="IPR003444">
    <property type="entry name" value="MraZ"/>
</dbReference>
<dbReference type="InterPro" id="IPR035644">
    <property type="entry name" value="MraZ_C"/>
</dbReference>
<dbReference type="InterPro" id="IPR020603">
    <property type="entry name" value="MraZ_dom"/>
</dbReference>
<dbReference type="InterPro" id="IPR035642">
    <property type="entry name" value="MraZ_N"/>
</dbReference>
<dbReference type="InterPro" id="IPR038619">
    <property type="entry name" value="MraZ_sf"/>
</dbReference>
<dbReference type="InterPro" id="IPR007159">
    <property type="entry name" value="SpoVT-AbrB_dom"/>
</dbReference>
<dbReference type="InterPro" id="IPR037914">
    <property type="entry name" value="SpoVT-AbrB_sf"/>
</dbReference>
<dbReference type="NCBIfam" id="TIGR00242">
    <property type="entry name" value="division/cell wall cluster transcriptional repressor MraZ"/>
    <property type="match status" value="1"/>
</dbReference>
<dbReference type="PANTHER" id="PTHR34701">
    <property type="entry name" value="TRANSCRIPTIONAL REGULATOR MRAZ"/>
    <property type="match status" value="1"/>
</dbReference>
<dbReference type="PANTHER" id="PTHR34701:SF1">
    <property type="entry name" value="TRANSCRIPTIONAL REGULATOR MRAZ"/>
    <property type="match status" value="1"/>
</dbReference>
<dbReference type="Pfam" id="PF02381">
    <property type="entry name" value="MraZ"/>
    <property type="match status" value="2"/>
</dbReference>
<dbReference type="SUPFAM" id="SSF89447">
    <property type="entry name" value="AbrB/MazE/MraZ-like"/>
    <property type="match status" value="1"/>
</dbReference>
<dbReference type="PROSITE" id="PS51740">
    <property type="entry name" value="SPOVT_ABRB"/>
    <property type="match status" value="2"/>
</dbReference>
<organism>
    <name type="scientific">Desulforapulum autotrophicum (strain ATCC 43914 / DSM 3382 / VKM B-1955 / HRM2)</name>
    <name type="common">Desulfobacterium autotrophicum</name>
    <dbReference type="NCBI Taxonomy" id="177437"/>
    <lineage>
        <taxon>Bacteria</taxon>
        <taxon>Pseudomonadati</taxon>
        <taxon>Thermodesulfobacteriota</taxon>
        <taxon>Desulfobacteria</taxon>
        <taxon>Desulfobacterales</taxon>
        <taxon>Desulfobacteraceae</taxon>
        <taxon>Desulforapulum</taxon>
    </lineage>
</organism>
<protein>
    <recommendedName>
        <fullName>Transcriptional regulator MraZ</fullName>
    </recommendedName>
</protein>
<gene>
    <name evidence="1" type="primary">mraZ</name>
    <name type="ordered locus">HRM2_12620</name>
</gene>
<proteinExistence type="inferred from homology"/>
<accession>C0Q8N4</accession>
<feature type="chain" id="PRO_1000213172" description="Transcriptional regulator MraZ">
    <location>
        <begin position="1"/>
        <end position="146"/>
    </location>
</feature>
<feature type="domain" description="SpoVT-AbrB 1" evidence="2">
    <location>
        <begin position="5"/>
        <end position="50"/>
    </location>
</feature>
<feature type="domain" description="SpoVT-AbrB 2" evidence="2">
    <location>
        <begin position="77"/>
        <end position="120"/>
    </location>
</feature>
<sequence>MFRASSFHTIDPKGRIIVPARFRDDIRAGGADGVMVSILDKALYAYTFNEWQAIEKKILSAKSEPMRRFKRFFLGNACECLCDKQGRILIPPSIRAYAGLEKEIVLVGMLDHFEIWSREQWDRENNLMEEELEKKEVREAIASLGL</sequence>
<comment type="subunit">
    <text evidence="1">Forms oligomers.</text>
</comment>
<comment type="subcellular location">
    <subcellularLocation>
        <location evidence="1">Cytoplasm</location>
        <location evidence="1">Nucleoid</location>
    </subcellularLocation>
</comment>
<comment type="similarity">
    <text evidence="1">Belongs to the MraZ family.</text>
</comment>
<reference key="1">
    <citation type="journal article" date="2009" name="Environ. Microbiol.">
        <title>Genome sequence of Desulfobacterium autotrophicum HRM2, a marine sulfate reducer oxidizing organic carbon completely to carbon dioxide.</title>
        <authorList>
            <person name="Strittmatter A.W."/>
            <person name="Liesegang H."/>
            <person name="Rabus R."/>
            <person name="Decker I."/>
            <person name="Amann J."/>
            <person name="Andres S."/>
            <person name="Henne A."/>
            <person name="Fricke W.F."/>
            <person name="Martinez-Arias R."/>
            <person name="Bartels D."/>
            <person name="Goesmann A."/>
            <person name="Krause L."/>
            <person name="Puehler A."/>
            <person name="Klenk H.P."/>
            <person name="Richter M."/>
            <person name="Schuler M."/>
            <person name="Gloeckner F.O."/>
            <person name="Meyerdierks A."/>
            <person name="Gottschalk G."/>
            <person name="Amann R."/>
        </authorList>
    </citation>
    <scope>NUCLEOTIDE SEQUENCE [LARGE SCALE GENOMIC DNA]</scope>
    <source>
        <strain>ATCC 43914 / DSM 3382 / VKM B-1955 / HRM2</strain>
    </source>
</reference>
<evidence type="ECO:0000255" key="1">
    <source>
        <dbReference type="HAMAP-Rule" id="MF_01008"/>
    </source>
</evidence>
<evidence type="ECO:0000255" key="2">
    <source>
        <dbReference type="PROSITE-ProRule" id="PRU01076"/>
    </source>
</evidence>